<accession>P08452</accession>
<accession>Q5N2V6</accession>
<evidence type="ECO:0000255" key="1">
    <source>
        <dbReference type="PROSITE-ProRule" id="PRU00303"/>
    </source>
</evidence>
<keyword id="KW-1003">Cell membrane</keyword>
<keyword id="KW-0449">Lipoprotein</keyword>
<keyword id="KW-0472">Membrane</keyword>
<keyword id="KW-0564">Palmitate</keyword>
<keyword id="KW-0732">Signal</keyword>
<feature type="signal peptide" evidence="1">
    <location>
        <begin position="1"/>
        <end position="17"/>
    </location>
</feature>
<feature type="chain" id="PRO_0000022697" description="Uncharacterized lipoprotein syc1174_c">
    <location>
        <begin position="18"/>
        <end position="359"/>
    </location>
</feature>
<feature type="lipid moiety-binding region" description="N-palmitoyl cysteine" evidence="1">
    <location>
        <position position="18"/>
    </location>
</feature>
<feature type="lipid moiety-binding region" description="S-diacylglycerol cysteine" evidence="1">
    <location>
        <position position="18"/>
    </location>
</feature>
<gene>
    <name type="ordered locus">syc1174_c</name>
</gene>
<reference key="1">
    <citation type="journal article" date="2007" name="Photosyn. Res.">
        <title>Complete nucleotide sequence of the freshwater unicellular cyanobacterium Synechococcus elongatus PCC 6301 chromosome: gene content and organization.</title>
        <authorList>
            <person name="Sugita C."/>
            <person name="Ogata K."/>
            <person name="Shikata M."/>
            <person name="Jikuya H."/>
            <person name="Takano J."/>
            <person name="Furumichi M."/>
            <person name="Kanehisa M."/>
            <person name="Omata T."/>
            <person name="Sugiura M."/>
            <person name="Sugita M."/>
        </authorList>
    </citation>
    <scope>NUCLEOTIDE SEQUENCE [LARGE SCALE GENOMIC DNA]</scope>
    <source>
        <strain>ATCC 27144 / PCC 6301 / SAUG 1402/1</strain>
    </source>
</reference>
<reference key="2">
    <citation type="journal article" date="1987" name="J. Mol. Biol.">
        <title>The organization and sequence of the genes for ATP synthase subunits in the cyanobacterium Synechococcus 6301. Support for an endosymbiotic origin of chloroplasts.</title>
        <authorList>
            <person name="Cozens A.L."/>
            <person name="Walker J.E."/>
        </authorList>
    </citation>
    <scope>NUCLEOTIDE SEQUENCE [GENOMIC DNA] OF 1-208</scope>
</reference>
<dbReference type="EMBL" id="AP008231">
    <property type="protein sequence ID" value="BAD79364.1"/>
    <property type="molecule type" value="Genomic_DNA"/>
</dbReference>
<dbReference type="EMBL" id="X05302">
    <property type="protein sequence ID" value="CAA28931.1"/>
    <property type="molecule type" value="Genomic_DNA"/>
</dbReference>
<dbReference type="PIR" id="S10834">
    <property type="entry name" value="S10834"/>
</dbReference>
<dbReference type="RefSeq" id="WP_011243486.1">
    <property type="nucleotide sequence ID" value="NZ_CP085785.1"/>
</dbReference>
<dbReference type="KEGG" id="syc:syc1174_c"/>
<dbReference type="eggNOG" id="COG0388">
    <property type="taxonomic scope" value="Bacteria"/>
</dbReference>
<dbReference type="Proteomes" id="UP000001175">
    <property type="component" value="Chromosome"/>
</dbReference>
<dbReference type="GO" id="GO:0005886">
    <property type="term" value="C:plasma membrane"/>
    <property type="evidence" value="ECO:0007669"/>
    <property type="project" value="UniProtKB-SubCell"/>
</dbReference>
<dbReference type="InterPro" id="IPR021763">
    <property type="entry name" value="DUF3326"/>
</dbReference>
<dbReference type="PANTHER" id="PTHR36891">
    <property type="entry name" value="OS01G0127400 PROTEIN"/>
    <property type="match status" value="1"/>
</dbReference>
<dbReference type="PANTHER" id="PTHR36891:SF1">
    <property type="entry name" value="OS01G0127400 PROTEIN"/>
    <property type="match status" value="1"/>
</dbReference>
<dbReference type="Pfam" id="PF11805">
    <property type="entry name" value="DUF3326"/>
    <property type="match status" value="1"/>
</dbReference>
<dbReference type="PROSITE" id="PS51257">
    <property type="entry name" value="PROKAR_LIPOPROTEIN"/>
    <property type="match status" value="1"/>
</dbReference>
<name>Y1174_SYNP6</name>
<comment type="subcellular location">
    <subcellularLocation>
        <location evidence="1">Cell membrane</location>
        <topology evidence="1">Lipid-anchor</topology>
    </subcellularLocation>
</comment>
<proteinExistence type="inferred from homology"/>
<protein>
    <recommendedName>
        <fullName>Uncharacterized lipoprotein syc1174_c</fullName>
    </recommendedName>
</protein>
<organism>
    <name type="scientific">Synechococcus sp. (strain ATCC 27144 / PCC 6301 / SAUG 1402/1)</name>
    <name type="common">Anacystis nidulans</name>
    <dbReference type="NCBI Taxonomy" id="269084"/>
    <lineage>
        <taxon>Bacteria</taxon>
        <taxon>Bacillati</taxon>
        <taxon>Cyanobacteriota</taxon>
        <taxon>Cyanophyceae</taxon>
        <taxon>Synechococcales</taxon>
        <taxon>Synechococcaceae</taxon>
        <taxon>Synechococcus</taxon>
    </lineage>
</organism>
<sequence>MLGRSLTSVLIVPTGIGCAVGGYAGDALPLARAIASVSDRLITHPNVMNGASLYWPLPNVAYVEGYALDRFAAGDWQLQPVHCNRIGLLLDAAIEPELRIRHQQVAEAAQATLGLSVTAAVITDAPLGVTLRQADSGSTWGTIDRPDSLLRAADQLLKAGCEAIAVIARFPDDPGAIALQDYRQGQGVDPLAGAEAVISHLIVREFQVPCAHAPALQPLPLDASISPRSAAEELGHTFLPCVLAGLSRAPRYRSATESIAESIRPESVDVVIAPETAIGGPGILHWAARGIPILAVAENRSTLDLRPVDLGVPVQHLQTHLEAVGWLAAYKAGLDPAALSPGDRRLSYLNHSVQQATSG</sequence>